<organism>
    <name type="scientific">Drosophila melanogaster</name>
    <name type="common">Fruit fly</name>
    <dbReference type="NCBI Taxonomy" id="7227"/>
    <lineage>
        <taxon>Eukaryota</taxon>
        <taxon>Metazoa</taxon>
        <taxon>Ecdysozoa</taxon>
        <taxon>Arthropoda</taxon>
        <taxon>Hexapoda</taxon>
        <taxon>Insecta</taxon>
        <taxon>Pterygota</taxon>
        <taxon>Neoptera</taxon>
        <taxon>Endopterygota</taxon>
        <taxon>Diptera</taxon>
        <taxon>Brachycera</taxon>
        <taxon>Muscomorpha</taxon>
        <taxon>Ephydroidea</taxon>
        <taxon>Drosophilidae</taxon>
        <taxon>Drosophila</taxon>
        <taxon>Sophophora</taxon>
    </lineage>
</organism>
<gene>
    <name type="primary">msps</name>
    <name evidence="22" type="ORF">CG5000</name>
</gene>
<sequence>MAEDTEYKKLPVEERCVHKLWKARVDGYEEAAKIFRELDDEKSPEWSKFAGLIKKMVVDSNALAQEKGLEAALIFVENSGLAGRTVGDVMTGIVQKCIAAPKTKTKELSVQVALMYVEIEKQEAVVEELVKGMEAKNPKIVSACVAATTLALREFGHKVIGVKPLIKKLAPLMSDRDKTVRDEGKQLAVEIYRWIGAAMKAQISTLPQVTLKELEDEFDKLKGERVEPSRYLKSQQEKQAKIADAAATEDAYNEDDGEAGVEEIDPMDLLDPVDILSKMPKDFYDKLEEKKWTLRKESLEVLEKLLTDHPKLENGEYGALVSALKKVITKDSNVVLVAMAGKCLALLAKGLAKRFSNYASACVPSLLEKFKEKKPNVVTALREAIDAIYASTSLEAQQESIVESLSNKNPSVKSETALFIARALTRTQPTALNKKLLKLLTTSLVKTLNEPDPTVRDSSAEALGTLIKLMGDKAVTPLLADVDPLKMAKIKECQEKAEIKIKVAGPKKETRPASAPTAKAAAPAKTVAGSVDPKPVTRPATTGARKVLKKPATVSGGGATSAPTAALKAGGKPLATEREITPEELQEKSEEILPAEILNGLVDSNWKNRLAAVEQLLGEISGFDAKQAGISQILIRTISGRKPGLKEMNFQVLKFKLDIIRSVAENYPLTTTTVDLVINEIIEKLADAKNGAAAADVLSAFAEATKLEYVVGKVLSFAFEQKSPKVQSEAFNWVNRSIIEFGFQLQPKTLIEDVRKGVQSTNPTVRASAIQMVGTMSMYMGKALMMFFDSEKPALKSQIQVEFDKNVGEKPPKPVRGVQRSSGGTAGNSPDNEDDDGGAAGEEEPINMADLLPRVDIAPQITEALLKEMSDKDWKTRNEGLTKLQAIISEARLIKPSIGDLAPALAHRLVDSNAKIAQTTLAICEQLATAMGAGCRNHVRNLFPGFLHALGDNKSFVRAAALNCINSFGEKGGYKEFFESEMIADALKGGSPALKTELWAWLADKLPGLPPKSVSKEDIHSMVPHLYAHICDRNADVRKNANEAVLGIMIHLGFDAMNRALDKQKPASKKDILAALEKARPNLPVKPLPKGKHQAPIPEEPKLKTVRGGGAGGAPGIQKSATARVAGGQDKQVPARKKDEDIDTSPLLCANSAKNQRLLDEQKMKVLKWTFVTPREEFTELLRDQMMTANVNKALIANMFHDDFRYHLKVIEQLSEDLAGNSKALVCNLDLILKWLTLRFYDTNPSVLIKGLEYLVQVFQVLIDEEYILAENEGSSFVPHLLLKIGDPKDAVRNGVRRVLRQVILVFPFVKVFGYVMEGLKSKNARQRTECLDELTFLIESYGMNICPQSAVREIARQISDRDNSVRNAALNCIVQVFFLSGEKTYKMIGHLNEKDLSMLDERIKRAKKTKKPTPPPSVDVPAPQRHDSIEIEDAEVGNGCDELPPPDEDGTFDQAPSSQLLLLQQQLQQLQQQAQQQKPSGPFGLDSQVISEIEKDWVRVDQMEQKPLLNVDISSLDEPIKVRPTRAGIHYPQEKFDRLISRQHYMQQTLTTSPSSTAGMTSGVSPYRSPMRLQHQQPQQQLENNIPNLADVLPKHDPQLVKVIKGVSSTDTLKARAAINELAAIIEAPEKQAVLRDYEEIFIQNVLAQFKNLSQIPSAQSVVVYQPLLSILYTFFHANILGKTLSVACIKNLMSALLNLMADPKLAVGDDSQYNKVINGICLKVLDKVDFTNLNCALIRLLRETCPEAKLPKFTDLLMKCIWRNVKMLPERSNELNYDAVILEVHEFMLALPSTWWQNRPSDTPMRTIKTILHNMAKVKGNAILQHLNQIPTHSELHTYLIRILKNFQKDGSASGIGASPQRAKEIASKRISHQTHDTVSQIFKLISDRDTKQQGLQKLYDFKQQNPDIDLSTFLQGSSAPFHKYIEEGLAEIERNQNAGSTQDNRTDVNYQNNGPDPDFWMDRLQYHMTGGAAKLASARSADDGSHMLDNKVVDENLCLNGMNAQKASLIKREKRDMSPNRLQHLQAKLAQIKKENHAQ</sequence>
<comment type="function">
    <text evidence="4 5 6 7 8 9 10 13 14 16 19">Binds to the plus end of microtubules and regulates microtubule dynamics and microtubule organization (Probable) (PubMed:10477755, PubMed:11433295, PubMed:15530399, PubMed:15775959, PubMed:16303556, PubMed:26953351, PubMed:32066907). Function in neurons is essential for adult survival, and is important for climbing behavior and activity (PubMed:37041188). Promotes cytoplasmic microtubule nucleation and elongation (PubMed:16303556, PubMed:17889670). May act as a microtubule antipause factor that rapidly catalyzes the transition from pause to either growth or shrinkage (PubMed:15775959). Involved in mitotic spindle elongation (PubMed:16303556). Involved in the establishment of cell polarity and mitotic spindle orientation in neuroblasts (PubMed:26953351). Required for maintaining the bipolarity of acentrosomal meiotic spindles; the function is dependent on tacc and involves ncd (PubMed:11433295). Involved in oocyte microtubule cytoskeleton organization and bicoid mRNA localization (PubMed:15530399). Seems to be involved in elongation of kinetochore-derived microtubule fibers (PubMed:19836241). In fat body cells, essential component of perinuclear non-centrosomal microtubule-organizing centers (ncMTOCs) which function to accommodate the organization of microtubule (MT) networks to control nuclear positioning and dynein motor-based retrograde endosomal trafficking (PubMed:32066907). Within the ncMTOCs, Msp300 and shot anchors the ncMTOC at the nuclear surface and recruits the MT minus-end regulators Patronin and Nin for assembly, anchoring and/or stabilization of circumferential and radial MTs at the ncMTOCs (PubMed:32066907). Patronin, and perhaps Nin, then recruits msps to the ncMTOC where it is required for the gamma-tubulin-independent elongation and assembly of radial MTs (PubMed:32066907).</text>
</comment>
<comment type="subunit">
    <text evidence="5 10 14 15">Interacts with tacc, dgt6 (PubMed:11433295, PubMed:19836241). Interacts with mv (PubMed:33725482). Interacts with Patronin (PubMed:32066907).</text>
</comment>
<comment type="interaction">
    <interactant intactId="EBI-87818">
        <id>Q9VEZ3</id>
    </interactant>
    <interactant intactId="EBI-136342">
        <id>Q9VCL2</id>
        <label>NEST:bs02f09</label>
    </interactant>
    <organismsDiffer>false</organismsDiffer>
    <experiments>2</experiments>
</comment>
<comment type="subcellular location">
    <subcellularLocation>
        <location evidence="4 13 15">Cytoplasm</location>
        <location evidence="4 13 15">Cytoskeleton</location>
        <location evidence="4 13 15">Microtubule organizing center</location>
        <location evidence="4 13 15">Centrosome</location>
    </subcellularLocation>
    <subcellularLocation>
        <location evidence="4 5 15">Cytoplasm</location>
        <location evidence="4 5 15">Cytoskeleton</location>
        <location evidence="4 5 15">Spindle</location>
    </subcellularLocation>
    <subcellularLocation>
        <location evidence="14">Cytoplasm</location>
        <location evidence="14">Cytoskeleton</location>
        <location evidence="14">Microtubule organizing center</location>
    </subcellularLocation>
    <subcellularLocation>
        <location evidence="14">Cytoplasm</location>
        <location evidence="14">Perinuclear region</location>
    </subcellularLocation>
    <text evidence="5 11 14 15">Localizes to the plus ends of growing microtubules in the cell interior in a Eb1-dependent manner (PubMed:21965297). Localizes to the lattice of growing and shrinking microtubule in a discontinuous pattern in the peripheral regions of interphase cells (PubMed:21965297). Localized at acentrosomal poles of female meiotic spindle (PubMed:11433295). In embryos, associates with centrosomes in prophase and metaphase, then associates with spindle microtubules (PubMed:33725482). In the fat body, localizes to a perinuclear non-centrosomal microtubule-organizing centers (ncMTOCs) (PubMed:32066907).</text>
</comment>
<comment type="developmental stage">
    <text evidence="15">Expressed in embryos (at protein level).</text>
</comment>
<comment type="domain">
    <text evidence="19 20 21">The TOG (tumor overexpressed gene) domains are arranged in a N-terminal pentameric array with each domain composed of six (for the most part non-canonical) HEAT repeats forming a oblong paddle-like structure. Intra-HEAT loops are positioned along a face of the TOG domain and bind to a single alpha/beta-tubulin heterodimer. The TOG domains in the array seem to be structurally and functionally polarized. Differential functions may range from microtubule (MT) lattice binding and/or free tubulin heterodimer binding to potentiating stable incorporation of tubulin into the MT lattice. TOG 1-2 show strong and TOG 3-4 weak tubulin binding; TOG 1-5 are required for full ability to promote MT polymerization.</text>
</comment>
<comment type="disruption phenotype">
    <text evidence="14 16">RNAi-mediated knockdown in the neurons of adult males, significantly reduces survival to 53 percent (PubMed:37041188). Adult survival begins to decrease from approximately day 14 post eclosion (PubMed:37041188). Pan-neuronal or glutamatergic neuron-specific RNAi-mediated knockdown decreases adult climbing behavior (PubMed:37041188). Glutamatergic neuron-specific RNAi-mediated knockdown also decreases activity (PubMed:37041188). RNAi-mediated knockdown reduces radial microtubules in fat body cells, resulting in strong defects in nuclear positioning (PubMed:32066907). No effect on the circumferential microtubules (PubMed:32066907). This results in plasma membrane overgrowth and impaired endocytosis resulting in entrapment of collagen IV at the plasma membrane (PubMed:32066907).</text>
</comment>
<comment type="similarity">
    <text evidence="17">Belongs to the TOG/XMAP215 family.</text>
</comment>
<dbReference type="EMBL" id="AE014297">
    <property type="protein sequence ID" value="AAF55269.3"/>
    <property type="molecule type" value="Genomic_DNA"/>
</dbReference>
<dbReference type="EMBL" id="BT023496">
    <property type="protein sequence ID" value="AAY84896.1"/>
    <property type="molecule type" value="mRNA"/>
</dbReference>
<dbReference type="RefSeq" id="NP_732105.2">
    <property type="nucleotide sequence ID" value="NM_169698.3"/>
</dbReference>
<dbReference type="PDB" id="2QK2">
    <property type="method" value="X-ray"/>
    <property type="resolution" value="2.10 A"/>
    <property type="chains" value="A=267-505"/>
</dbReference>
<dbReference type="PDB" id="4QMH">
    <property type="method" value="X-ray"/>
    <property type="resolution" value="1.65 A"/>
    <property type="chains" value="A=848-1084"/>
</dbReference>
<dbReference type="PDB" id="4Y5J">
    <property type="method" value="X-ray"/>
    <property type="resolution" value="2.30 A"/>
    <property type="chains" value="A=582-825"/>
</dbReference>
<dbReference type="PDB" id="5VJC">
    <property type="method" value="X-ray"/>
    <property type="resolution" value="2.00 A"/>
    <property type="chains" value="A/B=1141-1411"/>
</dbReference>
<dbReference type="PDBsum" id="2QK2"/>
<dbReference type="PDBsum" id="4QMH"/>
<dbReference type="PDBsum" id="4Y5J"/>
<dbReference type="PDBsum" id="5VJC"/>
<dbReference type="SMR" id="Q9VEZ3"/>
<dbReference type="FunCoup" id="Q9VEZ3">
    <property type="interactions" value="1531"/>
</dbReference>
<dbReference type="IntAct" id="Q9VEZ3">
    <property type="interactions" value="7"/>
</dbReference>
<dbReference type="STRING" id="7227.FBpp0293341"/>
<dbReference type="GlyGen" id="Q9VEZ3">
    <property type="glycosylation" value="1 site"/>
</dbReference>
<dbReference type="PaxDb" id="7227-FBpp0293341"/>
<dbReference type="DNASU" id="41952"/>
<dbReference type="EnsemblMetazoa" id="FBtr0301480">
    <property type="protein sequence ID" value="FBpp0290695"/>
    <property type="gene ID" value="FBgn0027948"/>
</dbReference>
<dbReference type="GeneID" id="41952"/>
<dbReference type="KEGG" id="dme:Dmel_CG5000"/>
<dbReference type="UCSC" id="CG5000-RA">
    <property type="organism name" value="d. melanogaster"/>
</dbReference>
<dbReference type="AGR" id="FB:FBgn0027948"/>
<dbReference type="CTD" id="41952"/>
<dbReference type="FlyBase" id="FBgn0027948">
    <property type="gene designation" value="msps"/>
</dbReference>
<dbReference type="VEuPathDB" id="VectorBase:FBgn0027948"/>
<dbReference type="eggNOG" id="KOG1820">
    <property type="taxonomic scope" value="Eukaryota"/>
</dbReference>
<dbReference type="GeneTree" id="ENSGT00390000014757"/>
<dbReference type="HOGENOM" id="CLU_000539_2_1_1"/>
<dbReference type="InParanoid" id="Q9VEZ3"/>
<dbReference type="OrthoDB" id="205662at2759"/>
<dbReference type="SignaLink" id="Q9VEZ3"/>
<dbReference type="BioGRID-ORCS" id="41952">
    <property type="hits" value="1 hit in 1 CRISPR screen"/>
</dbReference>
<dbReference type="CD-CODE" id="2838EF58">
    <property type="entry name" value="Centrosome"/>
</dbReference>
<dbReference type="EvolutionaryTrace" id="Q9VEZ3"/>
<dbReference type="GenomeRNAi" id="41952"/>
<dbReference type="PRO" id="PR:Q9VEZ3"/>
<dbReference type="Proteomes" id="UP000000803">
    <property type="component" value="Chromosome 3R"/>
</dbReference>
<dbReference type="Bgee" id="FBgn0027948">
    <property type="expression patterns" value="Expressed in auditory sensory neuron (Drosophila) in insect head and 265 other cell types or tissues"/>
</dbReference>
<dbReference type="ExpressionAtlas" id="Q9VEZ3">
    <property type="expression patterns" value="baseline and differential"/>
</dbReference>
<dbReference type="GO" id="GO:0005813">
    <property type="term" value="C:centrosome"/>
    <property type="evidence" value="ECO:0000314"/>
    <property type="project" value="UniProtKB"/>
</dbReference>
<dbReference type="GO" id="GO:0000776">
    <property type="term" value="C:kinetochore"/>
    <property type="evidence" value="ECO:0000318"/>
    <property type="project" value="GO_Central"/>
</dbReference>
<dbReference type="GO" id="GO:0035371">
    <property type="term" value="C:microtubule plus-end"/>
    <property type="evidence" value="ECO:0000314"/>
    <property type="project" value="FlyBase"/>
</dbReference>
<dbReference type="GO" id="GO:0048471">
    <property type="term" value="C:perinuclear region of cytoplasm"/>
    <property type="evidence" value="ECO:0007669"/>
    <property type="project" value="UniProtKB-SubCell"/>
</dbReference>
<dbReference type="GO" id="GO:0005819">
    <property type="term" value="C:spindle"/>
    <property type="evidence" value="ECO:0000314"/>
    <property type="project" value="UniProtKB"/>
</dbReference>
<dbReference type="GO" id="GO:0000922">
    <property type="term" value="C:spindle pole"/>
    <property type="evidence" value="ECO:0000318"/>
    <property type="project" value="GO_Central"/>
</dbReference>
<dbReference type="GO" id="GO:0008017">
    <property type="term" value="F:microtubule binding"/>
    <property type="evidence" value="ECO:0000318"/>
    <property type="project" value="GO_Central"/>
</dbReference>
<dbReference type="GO" id="GO:0061863">
    <property type="term" value="F:microtubule plus end polymerase"/>
    <property type="evidence" value="ECO:0000318"/>
    <property type="project" value="GO_Central"/>
</dbReference>
<dbReference type="GO" id="GO:0051010">
    <property type="term" value="F:microtubule plus-end binding"/>
    <property type="evidence" value="ECO:0007669"/>
    <property type="project" value="InterPro"/>
</dbReference>
<dbReference type="GO" id="GO:0015631">
    <property type="term" value="F:tubulin binding"/>
    <property type="evidence" value="ECO:0000314"/>
    <property type="project" value="FlyBase"/>
</dbReference>
<dbReference type="GO" id="GO:0007411">
    <property type="term" value="P:axon guidance"/>
    <property type="evidence" value="ECO:0000315"/>
    <property type="project" value="FlyBase"/>
</dbReference>
<dbReference type="GO" id="GO:0045450">
    <property type="term" value="P:bicoid mRNA localization"/>
    <property type="evidence" value="ECO:0000315"/>
    <property type="project" value="FlyBase"/>
</dbReference>
<dbReference type="GO" id="GO:0051298">
    <property type="term" value="P:centrosome duplication"/>
    <property type="evidence" value="ECO:0000318"/>
    <property type="project" value="GO_Central"/>
</dbReference>
<dbReference type="GO" id="GO:0031122">
    <property type="term" value="P:cytoplasmic microtubule organization"/>
    <property type="evidence" value="ECO:0000315"/>
    <property type="project" value="FlyBase"/>
</dbReference>
<dbReference type="GO" id="GO:0007029">
    <property type="term" value="P:endoplasmic reticulum organization"/>
    <property type="evidence" value="ECO:0000315"/>
    <property type="project" value="FlyBase"/>
</dbReference>
<dbReference type="GO" id="GO:0000132">
    <property type="term" value="P:establishment of mitotic spindle orientation"/>
    <property type="evidence" value="ECO:0000315"/>
    <property type="project" value="FlyBase"/>
</dbReference>
<dbReference type="GO" id="GO:0030951">
    <property type="term" value="P:establishment or maintenance of microtubule cytoskeleton polarity"/>
    <property type="evidence" value="ECO:0000318"/>
    <property type="project" value="GO_Central"/>
</dbReference>
<dbReference type="GO" id="GO:0045196">
    <property type="term" value="P:establishment or maintenance of neuroblast polarity"/>
    <property type="evidence" value="ECO:0000315"/>
    <property type="project" value="FlyBase"/>
</dbReference>
<dbReference type="GO" id="GO:0007143">
    <property type="term" value="P:female meiotic nuclear division"/>
    <property type="evidence" value="ECO:0000315"/>
    <property type="project" value="FlyBase"/>
</dbReference>
<dbReference type="GO" id="GO:0046785">
    <property type="term" value="P:microtubule polymerization"/>
    <property type="evidence" value="ECO:0000318"/>
    <property type="project" value="GO_Central"/>
</dbReference>
<dbReference type="GO" id="GO:0000278">
    <property type="term" value="P:mitotic cell cycle"/>
    <property type="evidence" value="ECO:0007001"/>
    <property type="project" value="FlyBase"/>
</dbReference>
<dbReference type="GO" id="GO:0000022">
    <property type="term" value="P:mitotic spindle elongation"/>
    <property type="evidence" value="ECO:0000315"/>
    <property type="project" value="FlyBase"/>
</dbReference>
<dbReference type="GO" id="GO:0007052">
    <property type="term" value="P:mitotic spindle organization"/>
    <property type="evidence" value="ECO:0000318"/>
    <property type="project" value="GO_Central"/>
</dbReference>
<dbReference type="GO" id="GO:0016325">
    <property type="term" value="P:oocyte microtubule cytoskeleton organization"/>
    <property type="evidence" value="ECO:0000315"/>
    <property type="project" value="FlyBase"/>
</dbReference>
<dbReference type="GO" id="GO:0048477">
    <property type="term" value="P:oogenesis"/>
    <property type="evidence" value="ECO:0000315"/>
    <property type="project" value="FlyBase"/>
</dbReference>
<dbReference type="GO" id="GO:0090063">
    <property type="term" value="P:positive regulation of microtubule nucleation"/>
    <property type="evidence" value="ECO:0000314"/>
    <property type="project" value="FlyBase"/>
</dbReference>
<dbReference type="GO" id="GO:0007344">
    <property type="term" value="P:pronuclear fusion"/>
    <property type="evidence" value="ECO:0000315"/>
    <property type="project" value="FlyBase"/>
</dbReference>
<dbReference type="FunFam" id="1.25.10.10:FF:000052">
    <property type="entry name" value="Cytoskeleton associated protein 5"/>
    <property type="match status" value="1"/>
</dbReference>
<dbReference type="FunFam" id="1.25.10.10:FF:000019">
    <property type="entry name" value="Cytoskeleton-associated protein 5"/>
    <property type="match status" value="1"/>
</dbReference>
<dbReference type="FunFam" id="1.25.10.10:FF:000050">
    <property type="entry name" value="Cytoskeleton-associated protein 5 isoform X1"/>
    <property type="match status" value="1"/>
</dbReference>
<dbReference type="FunFam" id="1.25.10.10:FF:000410">
    <property type="entry name" value="Mini spindles, isoform D"/>
    <property type="match status" value="1"/>
</dbReference>
<dbReference type="FunFam" id="1.25.10.10:FF:000063">
    <property type="entry name" value="Putative cytoskeleton-associated protein 5"/>
    <property type="match status" value="1"/>
</dbReference>
<dbReference type="Gene3D" id="1.25.10.10">
    <property type="entry name" value="Leucine-rich Repeat Variant"/>
    <property type="match status" value="5"/>
</dbReference>
<dbReference type="InterPro" id="IPR011989">
    <property type="entry name" value="ARM-like"/>
</dbReference>
<dbReference type="InterPro" id="IPR016024">
    <property type="entry name" value="ARM-type_fold"/>
</dbReference>
<dbReference type="InterPro" id="IPR024395">
    <property type="entry name" value="CLASP_N_dom"/>
</dbReference>
<dbReference type="InterPro" id="IPR021133">
    <property type="entry name" value="HEAT_type_2"/>
</dbReference>
<dbReference type="InterPro" id="IPR034085">
    <property type="entry name" value="TOG"/>
</dbReference>
<dbReference type="InterPro" id="IPR045110">
    <property type="entry name" value="XMAP215"/>
</dbReference>
<dbReference type="InterPro" id="IPR048491">
    <property type="entry name" value="XMAP215_CLASP_TOG"/>
</dbReference>
<dbReference type="PANTHER" id="PTHR12609">
    <property type="entry name" value="MICROTUBULE ASSOCIATED PROTEIN XMAP215"/>
    <property type="match status" value="1"/>
</dbReference>
<dbReference type="Pfam" id="PF12348">
    <property type="entry name" value="CLASP_N"/>
    <property type="match status" value="1"/>
</dbReference>
<dbReference type="Pfam" id="PF21041">
    <property type="entry name" value="XMAP215_CLASP_TOG"/>
    <property type="match status" value="4"/>
</dbReference>
<dbReference type="SMART" id="SM01349">
    <property type="entry name" value="TOG"/>
    <property type="match status" value="5"/>
</dbReference>
<dbReference type="SUPFAM" id="SSF48371">
    <property type="entry name" value="ARM repeat"/>
    <property type="match status" value="3"/>
</dbReference>
<dbReference type="PROSITE" id="PS50077">
    <property type="entry name" value="HEAT_REPEAT"/>
    <property type="match status" value="1"/>
</dbReference>
<protein>
    <recommendedName>
        <fullName>Protein mini spindles</fullName>
    </recommendedName>
</protein>
<feature type="chain" id="PRO_0000437574" description="Protein mini spindles">
    <location>
        <begin position="1"/>
        <end position="2042"/>
    </location>
</feature>
<feature type="repeat" description="HEAT 1" evidence="1">
    <location>
        <begin position="120"/>
        <end position="157"/>
    </location>
</feature>
<feature type="repeat" description="HEAT 2" evidence="1">
    <location>
        <begin position="160"/>
        <end position="197"/>
    </location>
</feature>
<feature type="repeat" description="HEAT 3" evidence="1">
    <location>
        <begin position="270"/>
        <end position="311"/>
    </location>
</feature>
<feature type="repeat" description="HEAT 4" evidence="1">
    <location>
        <begin position="315"/>
        <end position="353"/>
    </location>
</feature>
<feature type="repeat" description="HEAT 5" evidence="1">
    <location>
        <begin position="357"/>
        <end position="394"/>
    </location>
</feature>
<feature type="repeat" description="HEAT 6" evidence="1">
    <location>
        <begin position="396"/>
        <end position="433"/>
    </location>
</feature>
<feature type="repeat" description="HEAT 7" evidence="2">
    <location>
        <begin position="440"/>
        <end position="478"/>
    </location>
</feature>
<feature type="repeat" description="HEAT 8" evidence="1">
    <location>
        <begin position="587"/>
        <end position="624"/>
    </location>
</feature>
<feature type="repeat" description="HEAT 9" evidence="1">
    <location>
        <begin position="625"/>
        <end position="662"/>
    </location>
</feature>
<feature type="repeat" description="HEAT 10" evidence="1">
    <location>
        <begin position="672"/>
        <end position="710"/>
    </location>
</feature>
<feature type="repeat" description="HEAT 11" evidence="1">
    <location>
        <begin position="745"/>
        <end position="782"/>
    </location>
</feature>
<feature type="repeat" description="HEAT 12" evidence="1">
    <location>
        <begin position="856"/>
        <end position="893"/>
    </location>
</feature>
<feature type="repeat" description="HEAT 13" evidence="1">
    <location>
        <begin position="896"/>
        <end position="933"/>
    </location>
</feature>
<feature type="repeat" description="HEAT 14" evidence="1">
    <location>
        <begin position="937"/>
        <end position="974"/>
    </location>
</feature>
<feature type="repeat" description="HEAT 15" evidence="1">
    <location>
        <begin position="1017"/>
        <end position="1054"/>
    </location>
</feature>
<feature type="repeat" description="HEAT 16" evidence="1">
    <location>
        <begin position="1205"/>
        <end position="1242"/>
    </location>
</feature>
<feature type="repeat" description="HEAT 17" evidence="1">
    <location>
        <begin position="1272"/>
        <end position="1309"/>
    </location>
</feature>
<feature type="repeat" description="HEAT 18" evidence="1">
    <location>
        <begin position="1311"/>
        <end position="1344"/>
    </location>
</feature>
<feature type="repeat" description="HEAT 19" evidence="1">
    <location>
        <begin position="1346"/>
        <end position="1383"/>
    </location>
</feature>
<feature type="region of interest" description="Promotes microtubule polymerization" evidence="12">
    <location>
        <begin position="1"/>
        <end position="516"/>
    </location>
</feature>
<feature type="region of interest" description="Binds tubulin" evidence="12">
    <location>
        <begin position="1"/>
        <end position="505"/>
    </location>
</feature>
<feature type="region of interest" description="TOG 1" evidence="18">
    <location>
        <begin position="1"/>
        <end position="229"/>
    </location>
</feature>
<feature type="region of interest" description="TOG 2" evidence="18">
    <location>
        <begin position="267"/>
        <end position="505"/>
    </location>
</feature>
<feature type="region of interest" description="Association with microtubule lattice" evidence="11">
    <location>
        <begin position="498"/>
        <end position="821"/>
    </location>
</feature>
<feature type="region of interest" description="Disordered" evidence="3">
    <location>
        <begin position="506"/>
        <end position="572"/>
    </location>
</feature>
<feature type="region of interest" description="Promotes microtubule polymerization" evidence="12">
    <location>
        <begin position="581"/>
        <end position="1080"/>
    </location>
</feature>
<feature type="region of interest" description="TOG 3" evidence="18">
    <location>
        <begin position="581"/>
        <end position="814"/>
    </location>
</feature>
<feature type="region of interest" description="Disordered" evidence="3">
    <location>
        <begin position="804"/>
        <end position="849"/>
    </location>
</feature>
<feature type="region of interest" description="TOG 4" evidence="18">
    <location>
        <begin position="849"/>
        <end position="1087"/>
    </location>
</feature>
<feature type="region of interest" description="Disordered" evidence="3">
    <location>
        <begin position="1083"/>
        <end position="1140"/>
    </location>
</feature>
<feature type="region of interest" description="Association with microtubule lattice" evidence="11">
    <location>
        <begin position="1099"/>
        <end position="1428"/>
    </location>
</feature>
<feature type="region of interest" description="TOG 5" evidence="18">
    <location>
        <begin position="1179"/>
        <end position="1415"/>
    </location>
</feature>
<feature type="region of interest" description="Disordered" evidence="3">
    <location>
        <begin position="1407"/>
        <end position="1455"/>
    </location>
</feature>
<feature type="region of interest" description="Disordered" evidence="3">
    <location>
        <begin position="1940"/>
        <end position="1959"/>
    </location>
</feature>
<feature type="compositionally biased region" description="Low complexity" evidence="3">
    <location>
        <begin position="513"/>
        <end position="531"/>
    </location>
</feature>
<feature type="compositionally biased region" description="Polar residues" evidence="3">
    <location>
        <begin position="819"/>
        <end position="830"/>
    </location>
</feature>
<feature type="compositionally biased region" description="Acidic residues" evidence="3">
    <location>
        <begin position="831"/>
        <end position="845"/>
    </location>
</feature>
<feature type="compositionally biased region" description="Polar residues" evidence="3">
    <location>
        <begin position="1940"/>
        <end position="1957"/>
    </location>
</feature>
<feature type="mutagenesis site" description="Impairs microtubule polymerization. Disrupts tubulin binding; when associated with E-292." evidence="9 12">
    <original>W</original>
    <variation>E</variation>
    <location>
        <position position="21"/>
    </location>
</feature>
<feature type="mutagenesis site" description="Impairs microtubule polymerization. Disrupts tubulin binding; when associated with E-21." evidence="9 12">
    <original>W</original>
    <variation>E</variation>
    <location>
        <position position="292"/>
    </location>
</feature>
<feature type="mutagenesis site" description="Disrupts microtubule lattice binding." evidence="11">
    <original>KVLK</original>
    <variation>EAAE</variation>
    <location>
        <begin position="546"/>
        <end position="549"/>
    </location>
</feature>
<feature type="mutagenesis site" description="Impairs microtubule polymerization, decreases microtubule lattice localization." evidence="12">
    <original>W</original>
    <variation>E</variation>
    <location>
        <position position="606"/>
    </location>
</feature>
<feature type="mutagenesis site" description="Impairs microtubule polymerization, decreases microtubule lattice localization." evidence="12">
    <original>W</original>
    <variation>E</variation>
    <location>
        <position position="874"/>
    </location>
</feature>
<feature type="mutagenesis site" description="Disrupts microtubule lattice binding." evidence="11">
    <original>KLKTVR</original>
    <variation>ELEAAA</variation>
    <location>
        <begin position="1102"/>
        <end position="1107"/>
    </location>
</feature>
<feature type="helix" evidence="23">
    <location>
        <begin position="276"/>
        <end position="278"/>
    </location>
</feature>
<feature type="helix" evidence="23">
    <location>
        <begin position="283"/>
        <end position="287"/>
    </location>
</feature>
<feature type="helix" evidence="23">
    <location>
        <begin position="292"/>
        <end position="308"/>
    </location>
</feature>
<feature type="strand" evidence="23">
    <location>
        <begin position="310"/>
        <end position="312"/>
    </location>
</feature>
<feature type="helix" evidence="23">
    <location>
        <begin position="318"/>
        <end position="330"/>
    </location>
</feature>
<feature type="helix" evidence="23">
    <location>
        <begin position="334"/>
        <end position="351"/>
    </location>
</feature>
<feature type="helix" evidence="23">
    <location>
        <begin position="352"/>
        <end position="355"/>
    </location>
</feature>
<feature type="helix" evidence="23">
    <location>
        <begin position="356"/>
        <end position="368"/>
    </location>
</feature>
<feature type="helix" evidence="23">
    <location>
        <begin position="369"/>
        <end position="371"/>
    </location>
</feature>
<feature type="helix" evidence="23">
    <location>
        <begin position="375"/>
        <end position="389"/>
    </location>
</feature>
<feature type="helix" evidence="23">
    <location>
        <begin position="394"/>
        <end position="404"/>
    </location>
</feature>
<feature type="helix" evidence="23">
    <location>
        <begin position="410"/>
        <end position="424"/>
    </location>
</feature>
<feature type="helix" evidence="23">
    <location>
        <begin position="429"/>
        <end position="431"/>
    </location>
</feature>
<feature type="helix" evidence="23">
    <location>
        <begin position="434"/>
        <end position="448"/>
    </location>
</feature>
<feature type="helix" evidence="23">
    <location>
        <begin position="453"/>
        <end position="470"/>
    </location>
</feature>
<feature type="helix" evidence="23">
    <location>
        <begin position="472"/>
        <end position="475"/>
    </location>
</feature>
<feature type="helix" evidence="23">
    <location>
        <begin position="476"/>
        <end position="479"/>
    </location>
</feature>
<feature type="helix" evidence="23">
    <location>
        <begin position="484"/>
        <end position="496"/>
    </location>
</feature>
<feature type="helix" evidence="25">
    <location>
        <begin position="595"/>
        <end position="602"/>
    </location>
</feature>
<feature type="helix" evidence="25">
    <location>
        <begin position="606"/>
        <end position="619"/>
    </location>
</feature>
<feature type="helix" evidence="25">
    <location>
        <begin position="620"/>
        <end position="622"/>
    </location>
</feature>
<feature type="helix" evidence="25">
    <location>
        <begin position="630"/>
        <end position="639"/>
    </location>
</feature>
<feature type="strand" evidence="25">
    <location>
        <begin position="640"/>
        <end position="643"/>
    </location>
</feature>
<feature type="helix" evidence="25">
    <location>
        <begin position="644"/>
        <end position="646"/>
    </location>
</feature>
<feature type="helix" evidence="25">
    <location>
        <begin position="650"/>
        <end position="666"/>
    </location>
</feature>
<feature type="helix" evidence="25">
    <location>
        <begin position="671"/>
        <end position="683"/>
    </location>
</feature>
<feature type="helix" evidence="25">
    <location>
        <begin position="684"/>
        <end position="686"/>
    </location>
</feature>
<feature type="turn" evidence="25">
    <location>
        <begin position="688"/>
        <end position="690"/>
    </location>
</feature>
<feature type="helix" evidence="25">
    <location>
        <begin position="691"/>
        <end position="704"/>
    </location>
</feature>
<feature type="helix" evidence="25">
    <location>
        <begin position="707"/>
        <end position="720"/>
    </location>
</feature>
<feature type="helix" evidence="25">
    <location>
        <begin position="724"/>
        <end position="741"/>
    </location>
</feature>
<feature type="helix" evidence="25">
    <location>
        <begin position="747"/>
        <end position="758"/>
    </location>
</feature>
<feature type="helix" evidence="25">
    <location>
        <begin position="763"/>
        <end position="780"/>
    </location>
</feature>
<feature type="helix" evidence="25">
    <location>
        <begin position="782"/>
        <end position="788"/>
    </location>
</feature>
<feature type="helix" evidence="25">
    <location>
        <begin position="793"/>
        <end position="806"/>
    </location>
</feature>
<feature type="helix" evidence="24">
    <location>
        <begin position="858"/>
        <end position="860"/>
    </location>
</feature>
<feature type="helix" evidence="24">
    <location>
        <begin position="863"/>
        <end position="869"/>
    </location>
</feature>
<feature type="helix" evidence="24">
    <location>
        <begin position="874"/>
        <end position="891"/>
    </location>
</feature>
<feature type="helix" evidence="24">
    <location>
        <begin position="901"/>
        <end position="909"/>
    </location>
</feature>
<feature type="helix" evidence="24">
    <location>
        <begin position="914"/>
        <end position="931"/>
    </location>
</feature>
<feature type="helix" evidence="24">
    <location>
        <begin position="932"/>
        <end position="938"/>
    </location>
</feature>
<feature type="helix" evidence="24">
    <location>
        <begin position="939"/>
        <end position="949"/>
    </location>
</feature>
<feature type="helix" evidence="24">
    <location>
        <begin position="955"/>
        <end position="972"/>
    </location>
</feature>
<feature type="helix" evidence="24">
    <location>
        <begin position="975"/>
        <end position="977"/>
    </location>
</feature>
<feature type="helix" evidence="24">
    <location>
        <begin position="982"/>
        <end position="988"/>
    </location>
</feature>
<feature type="helix" evidence="24">
    <location>
        <begin position="992"/>
        <end position="1005"/>
    </location>
</feature>
<feature type="helix" evidence="24">
    <location>
        <begin position="1006"/>
        <end position="1008"/>
    </location>
</feature>
<feature type="helix" evidence="24">
    <location>
        <begin position="1011"/>
        <end position="1013"/>
    </location>
</feature>
<feature type="helix" evidence="24">
    <location>
        <begin position="1016"/>
        <end position="1029"/>
    </location>
</feature>
<feature type="helix" evidence="24">
    <location>
        <begin position="1035"/>
        <end position="1052"/>
    </location>
</feature>
<feature type="helix" evidence="24">
    <location>
        <begin position="1054"/>
        <end position="1064"/>
    </location>
</feature>
<feature type="helix" evidence="24">
    <location>
        <begin position="1069"/>
        <end position="1079"/>
    </location>
</feature>
<feature type="helix" evidence="24">
    <location>
        <begin position="1080"/>
        <end position="1082"/>
    </location>
</feature>
<feature type="helix" evidence="26">
    <location>
        <begin position="1153"/>
        <end position="1162"/>
    </location>
</feature>
<feature type="helix" evidence="26">
    <location>
        <begin position="1176"/>
        <end position="1188"/>
    </location>
</feature>
<feature type="helix" evidence="26">
    <location>
        <begin position="1193"/>
        <end position="1199"/>
    </location>
</feature>
<feature type="helix" evidence="26">
    <location>
        <begin position="1204"/>
        <end position="1217"/>
    </location>
</feature>
<feature type="turn" evidence="26">
    <location>
        <begin position="1218"/>
        <end position="1220"/>
    </location>
</feature>
<feature type="helix" evidence="26">
    <location>
        <begin position="1222"/>
        <end position="1227"/>
    </location>
</feature>
<feature type="helix" evidence="26">
    <location>
        <begin position="1229"/>
        <end position="1239"/>
    </location>
</feature>
<feature type="helix" evidence="26">
    <location>
        <begin position="1245"/>
        <end position="1264"/>
    </location>
</feature>
<feature type="helix" evidence="26">
    <location>
        <begin position="1271"/>
        <end position="1282"/>
    </location>
</feature>
<feature type="turn" evidence="26">
    <location>
        <begin position="1283"/>
        <end position="1286"/>
    </location>
</feature>
<feature type="helix" evidence="26">
    <location>
        <begin position="1290"/>
        <end position="1306"/>
    </location>
</feature>
<feature type="helix" evidence="26">
    <location>
        <begin position="1309"/>
        <end position="1318"/>
    </location>
</feature>
<feature type="helix" evidence="26">
    <location>
        <begin position="1319"/>
        <end position="1321"/>
    </location>
</feature>
<feature type="helix" evidence="26">
    <location>
        <begin position="1325"/>
        <end position="1342"/>
    </location>
</feature>
<feature type="helix" evidence="26">
    <location>
        <begin position="1344"/>
        <end position="1346"/>
    </location>
</feature>
<feature type="helix" evidence="26">
    <location>
        <begin position="1349"/>
        <end position="1357"/>
    </location>
</feature>
<feature type="helix" evidence="26">
    <location>
        <begin position="1358"/>
        <end position="1360"/>
    </location>
</feature>
<feature type="helix" evidence="26">
    <location>
        <begin position="1364"/>
        <end position="1381"/>
    </location>
</feature>
<feature type="helix" evidence="26">
    <location>
        <begin position="1382"/>
        <end position="1384"/>
    </location>
</feature>
<feature type="helix" evidence="26">
    <location>
        <begin position="1385"/>
        <end position="1388"/>
    </location>
</feature>
<feature type="helix" evidence="26">
    <location>
        <begin position="1394"/>
        <end position="1404"/>
    </location>
</feature>
<reference key="1">
    <citation type="journal article" date="2000" name="Science">
        <title>The genome sequence of Drosophila melanogaster.</title>
        <authorList>
            <person name="Adams M.D."/>
            <person name="Celniker S.E."/>
            <person name="Holt R.A."/>
            <person name="Evans C.A."/>
            <person name="Gocayne J.D."/>
            <person name="Amanatides P.G."/>
            <person name="Scherer S.E."/>
            <person name="Li P.W."/>
            <person name="Hoskins R.A."/>
            <person name="Galle R.F."/>
            <person name="George R.A."/>
            <person name="Lewis S.E."/>
            <person name="Richards S."/>
            <person name="Ashburner M."/>
            <person name="Henderson S.N."/>
            <person name="Sutton G.G."/>
            <person name="Wortman J.R."/>
            <person name="Yandell M.D."/>
            <person name="Zhang Q."/>
            <person name="Chen L.X."/>
            <person name="Brandon R.C."/>
            <person name="Rogers Y.-H.C."/>
            <person name="Blazej R.G."/>
            <person name="Champe M."/>
            <person name="Pfeiffer B.D."/>
            <person name="Wan K.H."/>
            <person name="Doyle C."/>
            <person name="Baxter E.G."/>
            <person name="Helt G."/>
            <person name="Nelson C.R."/>
            <person name="Miklos G.L.G."/>
            <person name="Abril J.F."/>
            <person name="Agbayani A."/>
            <person name="An H.-J."/>
            <person name="Andrews-Pfannkoch C."/>
            <person name="Baldwin D."/>
            <person name="Ballew R.M."/>
            <person name="Basu A."/>
            <person name="Baxendale J."/>
            <person name="Bayraktaroglu L."/>
            <person name="Beasley E.M."/>
            <person name="Beeson K.Y."/>
            <person name="Benos P.V."/>
            <person name="Berman B.P."/>
            <person name="Bhandari D."/>
            <person name="Bolshakov S."/>
            <person name="Borkova D."/>
            <person name="Botchan M.R."/>
            <person name="Bouck J."/>
            <person name="Brokstein P."/>
            <person name="Brottier P."/>
            <person name="Burtis K.C."/>
            <person name="Busam D.A."/>
            <person name="Butler H."/>
            <person name="Cadieu E."/>
            <person name="Center A."/>
            <person name="Chandra I."/>
            <person name="Cherry J.M."/>
            <person name="Cawley S."/>
            <person name="Dahlke C."/>
            <person name="Davenport L.B."/>
            <person name="Davies P."/>
            <person name="de Pablos B."/>
            <person name="Delcher A."/>
            <person name="Deng Z."/>
            <person name="Mays A.D."/>
            <person name="Dew I."/>
            <person name="Dietz S.M."/>
            <person name="Dodson K."/>
            <person name="Doup L.E."/>
            <person name="Downes M."/>
            <person name="Dugan-Rocha S."/>
            <person name="Dunkov B.C."/>
            <person name="Dunn P."/>
            <person name="Durbin K.J."/>
            <person name="Evangelista C.C."/>
            <person name="Ferraz C."/>
            <person name="Ferriera S."/>
            <person name="Fleischmann W."/>
            <person name="Fosler C."/>
            <person name="Gabrielian A.E."/>
            <person name="Garg N.S."/>
            <person name="Gelbart W.M."/>
            <person name="Glasser K."/>
            <person name="Glodek A."/>
            <person name="Gong F."/>
            <person name="Gorrell J.H."/>
            <person name="Gu Z."/>
            <person name="Guan P."/>
            <person name="Harris M."/>
            <person name="Harris N.L."/>
            <person name="Harvey D.A."/>
            <person name="Heiman T.J."/>
            <person name="Hernandez J.R."/>
            <person name="Houck J."/>
            <person name="Hostin D."/>
            <person name="Houston K.A."/>
            <person name="Howland T.J."/>
            <person name="Wei M.-H."/>
            <person name="Ibegwam C."/>
            <person name="Jalali M."/>
            <person name="Kalush F."/>
            <person name="Karpen G.H."/>
            <person name="Ke Z."/>
            <person name="Kennison J.A."/>
            <person name="Ketchum K.A."/>
            <person name="Kimmel B.E."/>
            <person name="Kodira C.D."/>
            <person name="Kraft C.L."/>
            <person name="Kravitz S."/>
            <person name="Kulp D."/>
            <person name="Lai Z."/>
            <person name="Lasko P."/>
            <person name="Lei Y."/>
            <person name="Levitsky A.A."/>
            <person name="Li J.H."/>
            <person name="Li Z."/>
            <person name="Liang Y."/>
            <person name="Lin X."/>
            <person name="Liu X."/>
            <person name="Mattei B."/>
            <person name="McIntosh T.C."/>
            <person name="McLeod M.P."/>
            <person name="McPherson D."/>
            <person name="Merkulov G."/>
            <person name="Milshina N.V."/>
            <person name="Mobarry C."/>
            <person name="Morris J."/>
            <person name="Moshrefi A."/>
            <person name="Mount S.M."/>
            <person name="Moy M."/>
            <person name="Murphy B."/>
            <person name="Murphy L."/>
            <person name="Muzny D.M."/>
            <person name="Nelson D.L."/>
            <person name="Nelson D.R."/>
            <person name="Nelson K.A."/>
            <person name="Nixon K."/>
            <person name="Nusskern D.R."/>
            <person name="Pacleb J.M."/>
            <person name="Palazzolo M."/>
            <person name="Pittman G.S."/>
            <person name="Pan S."/>
            <person name="Pollard J."/>
            <person name="Puri V."/>
            <person name="Reese M.G."/>
            <person name="Reinert K."/>
            <person name="Remington K."/>
            <person name="Saunders R.D.C."/>
            <person name="Scheeler F."/>
            <person name="Shen H."/>
            <person name="Shue B.C."/>
            <person name="Siden-Kiamos I."/>
            <person name="Simpson M."/>
            <person name="Skupski M.P."/>
            <person name="Smith T.J."/>
            <person name="Spier E."/>
            <person name="Spradling A.C."/>
            <person name="Stapleton M."/>
            <person name="Strong R."/>
            <person name="Sun E."/>
            <person name="Svirskas R."/>
            <person name="Tector C."/>
            <person name="Turner R."/>
            <person name="Venter E."/>
            <person name="Wang A.H."/>
            <person name="Wang X."/>
            <person name="Wang Z.-Y."/>
            <person name="Wassarman D.A."/>
            <person name="Weinstock G.M."/>
            <person name="Weissenbach J."/>
            <person name="Williams S.M."/>
            <person name="Woodage T."/>
            <person name="Worley K.C."/>
            <person name="Wu D."/>
            <person name="Yang S."/>
            <person name="Yao Q.A."/>
            <person name="Ye J."/>
            <person name="Yeh R.-F."/>
            <person name="Zaveri J.S."/>
            <person name="Zhan M."/>
            <person name="Zhang G."/>
            <person name="Zhao Q."/>
            <person name="Zheng L."/>
            <person name="Zheng X.H."/>
            <person name="Zhong F.N."/>
            <person name="Zhong W."/>
            <person name="Zhou X."/>
            <person name="Zhu S.C."/>
            <person name="Zhu X."/>
            <person name="Smith H.O."/>
            <person name="Gibbs R.A."/>
            <person name="Myers E.W."/>
            <person name="Rubin G.M."/>
            <person name="Venter J.C."/>
        </authorList>
    </citation>
    <scope>NUCLEOTIDE SEQUENCE [LARGE SCALE GENOMIC DNA]</scope>
    <source>
        <strain>Berkeley</strain>
    </source>
</reference>
<reference key="2">
    <citation type="journal article" date="2002" name="Genome Biol.">
        <title>Annotation of the Drosophila melanogaster euchromatic genome: a systematic review.</title>
        <authorList>
            <person name="Misra S."/>
            <person name="Crosby M.A."/>
            <person name="Mungall C.J."/>
            <person name="Matthews B.B."/>
            <person name="Campbell K.S."/>
            <person name="Hradecky P."/>
            <person name="Huang Y."/>
            <person name="Kaminker J.S."/>
            <person name="Millburn G.H."/>
            <person name="Prochnik S.E."/>
            <person name="Smith C.D."/>
            <person name="Tupy J.L."/>
            <person name="Whitfield E.J."/>
            <person name="Bayraktaroglu L."/>
            <person name="Berman B.P."/>
            <person name="Bettencourt B.R."/>
            <person name="Celniker S.E."/>
            <person name="de Grey A.D.N.J."/>
            <person name="Drysdale R.A."/>
            <person name="Harris N.L."/>
            <person name="Richter J."/>
            <person name="Russo S."/>
            <person name="Schroeder A.J."/>
            <person name="Shu S.Q."/>
            <person name="Stapleton M."/>
            <person name="Yamada C."/>
            <person name="Ashburner M."/>
            <person name="Gelbart W.M."/>
            <person name="Rubin G.M."/>
            <person name="Lewis S.E."/>
        </authorList>
    </citation>
    <scope>GENOME REANNOTATION</scope>
    <source>
        <strain>Berkeley</strain>
    </source>
</reference>
<reference key="3">
    <citation type="journal article" date="2002" name="Genome Biol.">
        <title>A Drosophila full-length cDNA resource.</title>
        <authorList>
            <person name="Stapleton M."/>
            <person name="Carlson J.W."/>
            <person name="Brokstein P."/>
            <person name="Yu C."/>
            <person name="Champe M."/>
            <person name="George R.A."/>
            <person name="Guarin H."/>
            <person name="Kronmiller B."/>
            <person name="Pacleb J.M."/>
            <person name="Park S."/>
            <person name="Wan K.H."/>
            <person name="Rubin G.M."/>
            <person name="Celniker S.E."/>
        </authorList>
    </citation>
    <scope>NUCLEOTIDE SEQUENCE [LARGE SCALE MRNA]</scope>
    <source>
        <strain>Berkeley</strain>
    </source>
</reference>
<reference key="4">
    <citation type="journal article" date="1999" name="J. Cell Biol.">
        <title>mini spindles: A gene encoding a conserved microtubule-associated protein required for the integrity of the mitotic spindle in Drosophila.</title>
        <authorList>
            <person name="Cullen C.F."/>
            <person name="Deak P."/>
            <person name="Glover D.M."/>
            <person name="Ohkura H."/>
        </authorList>
    </citation>
    <scope>FUNCTION</scope>
    <scope>SUBCELLULAR LOCATION</scope>
</reference>
<reference key="5">
    <citation type="journal article" date="2001" name="Nat. Cell Biol.">
        <title>Msps protein is localized to acentrosomal poles to ensure bipolarity of Drosophila meiotic spindles.</title>
        <authorList>
            <person name="Cullen C.F."/>
            <person name="Ohkura H."/>
        </authorList>
    </citation>
    <scope>FUNCTION</scope>
    <scope>INTERACTION WITH TACC</scope>
    <scope>SUBCELLULAR LOCATION</scope>
</reference>
<reference key="6">
    <citation type="journal article" date="2004" name="Curr. Biol.">
        <title>The Drosophila microtubule-associated protein mini spindles is required for cytoplasmic microtubules in oogenesis.</title>
        <authorList>
            <person name="Moon W."/>
            <person name="Hazelrigg T."/>
        </authorList>
    </citation>
    <scope>FUNCTION</scope>
</reference>
<reference key="7">
    <citation type="journal article" date="2005" name="Curr. Biol.">
        <title>Length control of the metaphase spindle.</title>
        <authorList>
            <person name="Goshima G."/>
            <person name="Wollman R."/>
            <person name="Stuurman N."/>
            <person name="Scholey J.M."/>
            <person name="Vale R.D."/>
        </authorList>
    </citation>
    <scope>FUNCTION</scope>
</reference>
<reference key="8">
    <citation type="journal article" date="2005" name="EMBO J.">
        <title>Mini spindles, the XMAP215 homologue, suppresses pausing of interphase microtubules in Drosophila.</title>
        <authorList>
            <person name="Brittle A.L."/>
            <person name="Ohkura H."/>
        </authorList>
    </citation>
    <scope>FUNCTION</scope>
</reference>
<reference key="9">
    <citation type="journal article" date="2009" name="Curr. Biol.">
        <title>Drosophila Dgt6 interacts with Ndc80, Msps/XMAP215, and gamma-tubulin to promote kinetochore-driven MT formation.</title>
        <authorList>
            <person name="Bucciarelli E."/>
            <person name="Pellacani C."/>
            <person name="Naim V."/>
            <person name="Palena A."/>
            <person name="Gatti M."/>
            <person name="Somma M.P."/>
        </authorList>
    </citation>
    <scope>FUNCTION</scope>
    <scope>INTERACTION WITH DGT6</scope>
</reference>
<reference key="10">
    <citation type="journal article" date="2011" name="Mol. Biol. Cell">
        <title>The microtubule lattice and plus-end association of Drosophila Mini spindles is spatially regulated to fine-tune microtubule dynamics.</title>
        <authorList>
            <person name="Currie J.D."/>
            <person name="Stewman S."/>
            <person name="Schimizzi G."/>
            <person name="Slep K.C."/>
            <person name="Ma A."/>
            <person name="Rogers S.L."/>
        </authorList>
    </citation>
    <scope>FUNCTION</scope>
    <scope>TOG DOMAIN</scope>
    <scope>SUBCELLULAR LOCATION</scope>
    <scope>MUTAGENESIS OF 546-LYS--LYS-549 AND 1102-LYS--ARG-1107</scope>
</reference>
<reference key="11">
    <citation type="journal article" date="2016" name="J. Cell Biol.">
        <title>Arl2- and Msps-dependent microtubule growth governs asymmetric division.</title>
        <authorList>
            <person name="Chen K."/>
            <person name="Koe C.T."/>
            <person name="Xing Z.B."/>
            <person name="Tian X."/>
            <person name="Rossi F."/>
            <person name="Wang C."/>
            <person name="Tang Q."/>
            <person name="Zong W."/>
            <person name="Hong W.J."/>
            <person name="Taneja R."/>
            <person name="Yu F."/>
            <person name="Gonzalez C."/>
            <person name="Wu C."/>
            <person name="Endow S."/>
            <person name="Wang H."/>
        </authorList>
    </citation>
    <scope>FUNCTION</scope>
    <scope>SUBCELLULAR LOCATION</scope>
</reference>
<reference key="12">
    <citation type="journal article" date="2020" name="Nat. Cell Biol.">
        <title>A perinuclear microtubule-organizing centre controls nuclear positioning and basement membrane secretion.</title>
        <authorList>
            <person name="Zheng Y."/>
            <person name="Buchwalter R.A."/>
            <person name="Zheng C."/>
            <person name="Wight E.M."/>
            <person name="Chen J.V."/>
            <person name="Megraw T.L."/>
        </authorList>
    </citation>
    <scope>FUNCTION</scope>
    <scope>INTERACTION WITH PATRONIN</scope>
    <scope>SUBCELLULAR LOCATION</scope>
    <scope>DISRUPTION PHENOTYPE</scope>
</reference>
<reference key="13">
    <citation type="journal article" date="2021" name="Dev. Cell">
        <title>Mauve/LYST limits fusion of lysosome-related organelles and promotes centrosomal recruitment of microtubule nucleating proteins.</title>
        <authorList>
            <person name="Lattao R."/>
            <person name="Rangone H."/>
            <person name="Llamazares S."/>
            <person name="Glover D.M."/>
        </authorList>
    </citation>
    <scope>INTERACTION WITH MV</scope>
    <scope>SUBCELLULAR LOCATION</scope>
    <scope>DEVELOPMENTAL STAGE</scope>
</reference>
<reference key="14">
    <citation type="journal article" date="2023" name="Sci. Rep.">
        <title>Adult expression of Semaphorins and Plexins is essential for motor neuron survival.</title>
        <authorList>
            <person name="Vaikakkara Chithran A."/>
            <person name="Allan D.W."/>
            <person name="O'Connor T.P."/>
        </authorList>
    </citation>
    <scope>FUNCTION</scope>
    <scope>DISRUPTION PHENOTYPE</scope>
</reference>
<reference key="15">
    <citation type="journal article" date="2007" name="Mol. Cell">
        <title>Structural basis of microtubule plus end tracking by XMAP215, CLIP-170, and EB1.</title>
        <authorList>
            <person name="Slep K.C."/>
            <person name="Vale R.D."/>
        </authorList>
    </citation>
    <scope>X-RAY CRYSTALLOGRAPHY (2.10 ANGSTROMS) OF 267-505</scope>
    <scope>TOG DOMAIN</scope>
    <scope>FUNCTION</scope>
    <scope>MUTAGENESIS OF TRP-21 AND TRP-292</scope>
</reference>
<reference key="16">
    <citation type="journal article" date="2014" name="Mol. Biol. Cell">
        <title>The XMAP215 family drives microtubule polymerization using a structurally diverse TOG array.</title>
        <authorList>
            <person name="Fox J.C."/>
            <person name="Howard A.E."/>
            <person name="Currie J.D."/>
            <person name="Rogers S.L."/>
            <person name="Slep K.C."/>
        </authorList>
    </citation>
    <scope>X-RAY CRYSTALLOGRAPHY (1.65 ANGSTROMS) OF 848-1084</scope>
    <scope>TOG DOMAIN</scope>
    <scope>MUTAGENESIS OF TRP-21; TRP-292; TRP-606 AND TRP-874</scope>
</reference>
<reference key="17">
    <citation type="journal article" date="2015" name="J. Biol. Chem.">
        <title>Drosophila melanogaster mini spindles TOG3 utilizes unique structural elements to promote domain stability and maintain a TOG1- and TOG2-like tubulin-binding surface.</title>
        <authorList>
            <person name="Howard A.E."/>
            <person name="Fox J.C."/>
            <person name="Slep K.C."/>
        </authorList>
    </citation>
    <scope>X-RAY CRYSTALLOGRAPHY (2.30 ANGSTROMS) OF 582-825</scope>
    <scope>TOG DOMAIN</scope>
</reference>
<accession>Q9VEZ3</accession>
<accession>Q4QQC0</accession>
<keyword id="KW-0002">3D-structure</keyword>
<keyword id="KW-0131">Cell cycle</keyword>
<keyword id="KW-0132">Cell division</keyword>
<keyword id="KW-0963">Cytoplasm</keyword>
<keyword id="KW-0206">Cytoskeleton</keyword>
<keyword id="KW-0469">Meiosis</keyword>
<keyword id="KW-0498">Mitosis</keyword>
<keyword id="KW-1185">Reference proteome</keyword>
<keyword id="KW-0677">Repeat</keyword>
<evidence type="ECO:0000255" key="1"/>
<evidence type="ECO:0000255" key="2">
    <source>
        <dbReference type="PROSITE-ProRule" id="PRU00103"/>
    </source>
</evidence>
<evidence type="ECO:0000256" key="3">
    <source>
        <dbReference type="SAM" id="MobiDB-lite"/>
    </source>
</evidence>
<evidence type="ECO:0000269" key="4">
    <source>
    </source>
</evidence>
<evidence type="ECO:0000269" key="5">
    <source>
    </source>
</evidence>
<evidence type="ECO:0000269" key="6">
    <source>
    </source>
</evidence>
<evidence type="ECO:0000269" key="7">
    <source>
    </source>
</evidence>
<evidence type="ECO:0000269" key="8">
    <source>
    </source>
</evidence>
<evidence type="ECO:0000269" key="9">
    <source>
    </source>
</evidence>
<evidence type="ECO:0000269" key="10">
    <source>
    </source>
</evidence>
<evidence type="ECO:0000269" key="11">
    <source>
    </source>
</evidence>
<evidence type="ECO:0000269" key="12">
    <source>
    </source>
</evidence>
<evidence type="ECO:0000269" key="13">
    <source>
    </source>
</evidence>
<evidence type="ECO:0000269" key="14">
    <source>
    </source>
</evidence>
<evidence type="ECO:0000269" key="15">
    <source>
    </source>
</evidence>
<evidence type="ECO:0000269" key="16">
    <source>
    </source>
</evidence>
<evidence type="ECO:0000305" key="17"/>
<evidence type="ECO:0000305" key="18">
    <source>
    </source>
</evidence>
<evidence type="ECO:0000305" key="19">
    <source>
    </source>
</evidence>
<evidence type="ECO:0000305" key="20">
    <source>
    </source>
</evidence>
<evidence type="ECO:0000305" key="21">
    <source>
    </source>
</evidence>
<evidence type="ECO:0000312" key="22">
    <source>
        <dbReference type="FlyBase" id="FBgn0027948"/>
    </source>
</evidence>
<evidence type="ECO:0007829" key="23">
    <source>
        <dbReference type="PDB" id="2QK2"/>
    </source>
</evidence>
<evidence type="ECO:0007829" key="24">
    <source>
        <dbReference type="PDB" id="4QMH"/>
    </source>
</evidence>
<evidence type="ECO:0007829" key="25">
    <source>
        <dbReference type="PDB" id="4Y5J"/>
    </source>
</evidence>
<evidence type="ECO:0007829" key="26">
    <source>
        <dbReference type="PDB" id="5VJC"/>
    </source>
</evidence>
<name>MSPS_DROME</name>
<proteinExistence type="evidence at protein level"/>